<accession>A4QF39</accession>
<comment type="function">
    <text evidence="1">Endonuclease that specifically degrades the RNA of RNA-DNA hybrids.</text>
</comment>
<comment type="catalytic activity">
    <reaction evidence="1">
        <text>Endonucleolytic cleavage to 5'-phosphomonoester.</text>
        <dbReference type="EC" id="3.1.26.4"/>
    </reaction>
</comment>
<comment type="cofactor">
    <cofactor evidence="1">
        <name>Mn(2+)</name>
        <dbReference type="ChEBI" id="CHEBI:29035"/>
    </cofactor>
    <cofactor evidence="1">
        <name>Mg(2+)</name>
        <dbReference type="ChEBI" id="CHEBI:18420"/>
    </cofactor>
    <text evidence="1">Manganese or magnesium. Binds 1 divalent metal ion per monomer in the absence of substrate. May bind a second metal ion after substrate binding.</text>
</comment>
<comment type="subcellular location">
    <subcellularLocation>
        <location evidence="1">Cytoplasm</location>
    </subcellularLocation>
</comment>
<comment type="similarity">
    <text evidence="1">Belongs to the RNase HII family.</text>
</comment>
<evidence type="ECO:0000255" key="1">
    <source>
        <dbReference type="HAMAP-Rule" id="MF_00052"/>
    </source>
</evidence>
<evidence type="ECO:0000255" key="2">
    <source>
        <dbReference type="PROSITE-ProRule" id="PRU01319"/>
    </source>
</evidence>
<feature type="chain" id="PRO_0000334889" description="Ribonuclease HII">
    <location>
        <begin position="1"/>
        <end position="209"/>
    </location>
</feature>
<feature type="domain" description="RNase H type-2" evidence="2">
    <location>
        <begin position="7"/>
        <end position="198"/>
    </location>
</feature>
<feature type="binding site" evidence="1">
    <location>
        <position position="13"/>
    </location>
    <ligand>
        <name>a divalent metal cation</name>
        <dbReference type="ChEBI" id="CHEBI:60240"/>
    </ligand>
</feature>
<feature type="binding site" evidence="1">
    <location>
        <position position="14"/>
    </location>
    <ligand>
        <name>a divalent metal cation</name>
        <dbReference type="ChEBI" id="CHEBI:60240"/>
    </ligand>
</feature>
<feature type="binding site" evidence="1">
    <location>
        <position position="107"/>
    </location>
    <ligand>
        <name>a divalent metal cation</name>
        <dbReference type="ChEBI" id="CHEBI:60240"/>
    </ligand>
</feature>
<gene>
    <name evidence="1" type="primary">rnhB</name>
    <name type="ordered locus">cgR_1861</name>
</gene>
<sequence>MSRNGLGPVAGVDEAGRGACCGPISIAACILPDKPIQELAALTDSKNLSASTREKLMPLIKKHALAWSVIVISAQDIDRFGIQHANISGMRRAVAALDTQPGYVLTDAMKVPGFTVPYLPIIGGDASARCIAAASVLAKQTRDDIMTDMANDYPHYGLEIHKGYSTKIHMDAVRHHGASPEHRYSYANVAKAHQEWLHAADNDTTEGGA</sequence>
<keyword id="KW-0963">Cytoplasm</keyword>
<keyword id="KW-0255">Endonuclease</keyword>
<keyword id="KW-0378">Hydrolase</keyword>
<keyword id="KW-0464">Manganese</keyword>
<keyword id="KW-0479">Metal-binding</keyword>
<keyword id="KW-0540">Nuclease</keyword>
<name>RNH2_CORGB</name>
<protein>
    <recommendedName>
        <fullName evidence="1">Ribonuclease HII</fullName>
        <shortName evidence="1">RNase HII</shortName>
        <ecNumber evidence="1">3.1.26.4</ecNumber>
    </recommendedName>
</protein>
<dbReference type="EC" id="3.1.26.4" evidence="1"/>
<dbReference type="EMBL" id="AP009044">
    <property type="protein sequence ID" value="BAF54855.1"/>
    <property type="molecule type" value="Genomic_DNA"/>
</dbReference>
<dbReference type="SMR" id="A4QF39"/>
<dbReference type="KEGG" id="cgt:cgR_1861"/>
<dbReference type="HOGENOM" id="CLU_036532_1_0_11"/>
<dbReference type="PhylomeDB" id="A4QF39"/>
<dbReference type="Proteomes" id="UP000006698">
    <property type="component" value="Chromosome"/>
</dbReference>
<dbReference type="GO" id="GO:0005737">
    <property type="term" value="C:cytoplasm"/>
    <property type="evidence" value="ECO:0007669"/>
    <property type="project" value="UniProtKB-SubCell"/>
</dbReference>
<dbReference type="GO" id="GO:0032299">
    <property type="term" value="C:ribonuclease H2 complex"/>
    <property type="evidence" value="ECO:0007669"/>
    <property type="project" value="TreeGrafter"/>
</dbReference>
<dbReference type="GO" id="GO:0030145">
    <property type="term" value="F:manganese ion binding"/>
    <property type="evidence" value="ECO:0007669"/>
    <property type="project" value="UniProtKB-UniRule"/>
</dbReference>
<dbReference type="GO" id="GO:0003723">
    <property type="term" value="F:RNA binding"/>
    <property type="evidence" value="ECO:0007669"/>
    <property type="project" value="InterPro"/>
</dbReference>
<dbReference type="GO" id="GO:0004523">
    <property type="term" value="F:RNA-DNA hybrid ribonuclease activity"/>
    <property type="evidence" value="ECO:0007669"/>
    <property type="project" value="UniProtKB-UniRule"/>
</dbReference>
<dbReference type="GO" id="GO:0043137">
    <property type="term" value="P:DNA replication, removal of RNA primer"/>
    <property type="evidence" value="ECO:0007669"/>
    <property type="project" value="TreeGrafter"/>
</dbReference>
<dbReference type="GO" id="GO:0006298">
    <property type="term" value="P:mismatch repair"/>
    <property type="evidence" value="ECO:0007669"/>
    <property type="project" value="TreeGrafter"/>
</dbReference>
<dbReference type="CDD" id="cd07182">
    <property type="entry name" value="RNase_HII_bacteria_HII_like"/>
    <property type="match status" value="1"/>
</dbReference>
<dbReference type="Gene3D" id="3.30.420.10">
    <property type="entry name" value="Ribonuclease H-like superfamily/Ribonuclease H"/>
    <property type="match status" value="1"/>
</dbReference>
<dbReference type="HAMAP" id="MF_00052_B">
    <property type="entry name" value="RNase_HII_B"/>
    <property type="match status" value="1"/>
</dbReference>
<dbReference type="InterPro" id="IPR022898">
    <property type="entry name" value="RNase_HII"/>
</dbReference>
<dbReference type="InterPro" id="IPR001352">
    <property type="entry name" value="RNase_HII/HIII"/>
</dbReference>
<dbReference type="InterPro" id="IPR024567">
    <property type="entry name" value="RNase_HII/HIII_dom"/>
</dbReference>
<dbReference type="InterPro" id="IPR012337">
    <property type="entry name" value="RNaseH-like_sf"/>
</dbReference>
<dbReference type="InterPro" id="IPR036397">
    <property type="entry name" value="RNaseH_sf"/>
</dbReference>
<dbReference type="NCBIfam" id="NF000595">
    <property type="entry name" value="PRK00015.1-3"/>
    <property type="match status" value="1"/>
</dbReference>
<dbReference type="NCBIfam" id="NF000598">
    <property type="entry name" value="PRK00015.2-2"/>
    <property type="match status" value="1"/>
</dbReference>
<dbReference type="PANTHER" id="PTHR10954">
    <property type="entry name" value="RIBONUCLEASE H2 SUBUNIT A"/>
    <property type="match status" value="1"/>
</dbReference>
<dbReference type="PANTHER" id="PTHR10954:SF18">
    <property type="entry name" value="RIBONUCLEASE HII"/>
    <property type="match status" value="1"/>
</dbReference>
<dbReference type="Pfam" id="PF01351">
    <property type="entry name" value="RNase_HII"/>
    <property type="match status" value="1"/>
</dbReference>
<dbReference type="SUPFAM" id="SSF53098">
    <property type="entry name" value="Ribonuclease H-like"/>
    <property type="match status" value="1"/>
</dbReference>
<dbReference type="PROSITE" id="PS51975">
    <property type="entry name" value="RNASE_H_2"/>
    <property type="match status" value="1"/>
</dbReference>
<proteinExistence type="inferred from homology"/>
<organism>
    <name type="scientific">Corynebacterium glutamicum (strain R)</name>
    <dbReference type="NCBI Taxonomy" id="340322"/>
    <lineage>
        <taxon>Bacteria</taxon>
        <taxon>Bacillati</taxon>
        <taxon>Actinomycetota</taxon>
        <taxon>Actinomycetes</taxon>
        <taxon>Mycobacteriales</taxon>
        <taxon>Corynebacteriaceae</taxon>
        <taxon>Corynebacterium</taxon>
    </lineage>
</organism>
<reference key="1">
    <citation type="journal article" date="2007" name="Microbiology">
        <title>Comparative analysis of the Corynebacterium glutamicum group and complete genome sequence of strain R.</title>
        <authorList>
            <person name="Yukawa H."/>
            <person name="Omumasaba C.A."/>
            <person name="Nonaka H."/>
            <person name="Kos P."/>
            <person name="Okai N."/>
            <person name="Suzuki N."/>
            <person name="Suda M."/>
            <person name="Tsuge Y."/>
            <person name="Watanabe J."/>
            <person name="Ikeda Y."/>
            <person name="Vertes A.A."/>
            <person name="Inui M."/>
        </authorList>
    </citation>
    <scope>NUCLEOTIDE SEQUENCE [LARGE SCALE GENOMIC DNA]</scope>
    <source>
        <strain>R</strain>
    </source>
</reference>